<protein>
    <recommendedName>
        <fullName>Mitochondrial import receptor subunit TOM40</fullName>
    </recommendedName>
    <alternativeName>
        <fullName>Mitochondrial import site protein ISP42</fullName>
    </alternativeName>
    <alternativeName>
        <fullName>Translocase of outer membrane 40 kDa subunit</fullName>
    </alternativeName>
</protein>
<accession>P23644</accession>
<accession>D6W028</accession>
<accession>Q6B1Q9</accession>
<name>TOM40_YEAST</name>
<gene>
    <name type="primary">TOM40</name>
    <name type="synonym">ISP42</name>
    <name type="synonym">MOM38</name>
    <name type="ordered locus">YMR203W</name>
    <name type="ORF">YM8325.04</name>
</gene>
<evidence type="ECO:0000269" key="1">
    <source>
    </source>
</evidence>
<evidence type="ECO:0000269" key="2">
    <source>
    </source>
</evidence>
<evidence type="ECO:0000269" key="3">
    <source>
    </source>
</evidence>
<evidence type="ECO:0000305" key="4"/>
<evidence type="ECO:0007829" key="5">
    <source>
        <dbReference type="PDB" id="7E4H"/>
    </source>
</evidence>
<feature type="chain" id="PRO_0000051535" description="Mitochondrial import receptor subunit TOM40">
    <location>
        <begin position="1"/>
        <end position="387"/>
    </location>
</feature>
<feature type="sequence conflict" description="In Ref. 4; AAT93040." evidence="4" ref="4">
    <original>L</original>
    <variation>M</variation>
    <location>
        <position position="387"/>
    </location>
</feature>
<feature type="helix" evidence="5">
    <location>
        <begin position="51"/>
        <end position="55"/>
    </location>
</feature>
<feature type="turn" evidence="5">
    <location>
        <begin position="64"/>
        <end position="67"/>
    </location>
</feature>
<feature type="helix" evidence="5">
    <location>
        <begin position="68"/>
        <end position="71"/>
    </location>
</feature>
<feature type="turn" evidence="5">
    <location>
        <begin position="72"/>
        <end position="74"/>
    </location>
</feature>
<feature type="turn" evidence="5">
    <location>
        <begin position="77"/>
        <end position="79"/>
    </location>
</feature>
<feature type="strand" evidence="5">
    <location>
        <begin position="83"/>
        <end position="93"/>
    </location>
</feature>
<feature type="turn" evidence="5">
    <location>
        <begin position="94"/>
        <end position="96"/>
    </location>
</feature>
<feature type="strand" evidence="5">
    <location>
        <begin position="97"/>
        <end position="107"/>
    </location>
</feature>
<feature type="strand" evidence="5">
    <location>
        <begin position="109"/>
        <end position="111"/>
    </location>
</feature>
<feature type="strand" evidence="5">
    <location>
        <begin position="113"/>
        <end position="121"/>
    </location>
</feature>
<feature type="strand" evidence="5">
    <location>
        <begin position="123"/>
        <end position="132"/>
    </location>
</feature>
<feature type="turn" evidence="5">
    <location>
        <begin position="133"/>
        <end position="135"/>
    </location>
</feature>
<feature type="strand" evidence="5">
    <location>
        <begin position="136"/>
        <end position="143"/>
    </location>
</feature>
<feature type="strand" evidence="5">
    <location>
        <begin position="145"/>
        <end position="157"/>
    </location>
</feature>
<feature type="strand" evidence="5">
    <location>
        <begin position="159"/>
        <end position="161"/>
    </location>
</feature>
<feature type="strand" evidence="5">
    <location>
        <begin position="164"/>
        <end position="172"/>
    </location>
</feature>
<feature type="strand" evidence="5">
    <location>
        <begin position="174"/>
        <end position="184"/>
    </location>
</feature>
<feature type="strand" evidence="5">
    <location>
        <begin position="195"/>
        <end position="203"/>
    </location>
</feature>
<feature type="strand" evidence="5">
    <location>
        <begin position="205"/>
        <end position="224"/>
    </location>
</feature>
<feature type="strand" evidence="5">
    <location>
        <begin position="227"/>
        <end position="237"/>
    </location>
</feature>
<feature type="strand" evidence="5">
    <location>
        <begin position="241"/>
        <end position="249"/>
    </location>
</feature>
<feature type="strand" evidence="5">
    <location>
        <begin position="255"/>
        <end position="262"/>
    </location>
</feature>
<feature type="strand" evidence="5">
    <location>
        <begin position="264"/>
        <end position="275"/>
    </location>
</feature>
<feature type="strand" evidence="5">
    <location>
        <begin position="299"/>
        <end position="308"/>
    </location>
</feature>
<feature type="strand" evidence="5">
    <location>
        <begin position="310"/>
        <end position="319"/>
    </location>
</feature>
<feature type="strand" evidence="5">
    <location>
        <begin position="322"/>
        <end position="331"/>
    </location>
</feature>
<feature type="strand" evidence="5">
    <location>
        <begin position="333"/>
        <end position="345"/>
    </location>
</feature>
<feature type="turn" evidence="5">
    <location>
        <begin position="346"/>
        <end position="349"/>
    </location>
</feature>
<feature type="strand" evidence="5">
    <location>
        <begin position="352"/>
        <end position="362"/>
    </location>
</feature>
<feature type="helix" evidence="5">
    <location>
        <begin position="365"/>
        <end position="372"/>
    </location>
</feature>
<comment type="function">
    <text evidence="1">Channel-forming protein essential for import of protein precursors into mitochondria.</text>
</comment>
<comment type="subunit">
    <text evidence="2 3">Forms part of the preprotein translocase complex of the outer mitochondrial membrane (TOM complex) which consists of at least 7 different proteins (TOM5, TOM6, TOM7, TOM20, TOM22, TOM40 and TOM70). Interacts with mitochondrial targeting sequences. Interacts with FCJ1.</text>
</comment>
<comment type="interaction">
    <interactant intactId="EBI-12539">
        <id>P23644</id>
    </interactant>
    <interactant intactId="EBI-28646">
        <id>P53969</id>
        <label>SAM50</label>
    </interactant>
    <organismsDiffer>false</organismsDiffer>
    <experiments>4</experiments>
</comment>
<comment type="interaction">
    <interactant intactId="EBI-12539">
        <id>P23644</id>
    </interactant>
    <interactant intactId="EBI-30302">
        <id>Q02776</id>
        <label>TIM50</label>
    </interactant>
    <organismsDiffer>false</organismsDiffer>
    <experiments>2</experiments>
</comment>
<comment type="interaction">
    <interactant intactId="EBI-12539">
        <id>P23644</id>
    </interactant>
    <interactant intactId="EBI-12522">
        <id>P35180</id>
        <label>TOM20</label>
    </interactant>
    <organismsDiffer>false</organismsDiffer>
    <experiments>4</experiments>
</comment>
<comment type="interaction">
    <interactant intactId="EBI-12539">
        <id>P23644</id>
    </interactant>
    <interactant intactId="EBI-12527">
        <id>P49334</id>
        <label>TOM22</label>
    </interactant>
    <organismsDiffer>false</organismsDiffer>
    <experiments>9</experiments>
</comment>
<comment type="interaction">
    <interactant intactId="EBI-12539">
        <id>P23644</id>
    </interactant>
    <interactant intactId="EBI-516580">
        <id>Q07812</id>
        <label>BAX</label>
    </interactant>
    <organismsDiffer>true</organismsDiffer>
    <experiments>2</experiments>
</comment>
<comment type="subcellular location">
    <subcellularLocation>
        <location>Mitochondrion outer membrane</location>
        <topology>Multi-pass membrane protein</topology>
    </subcellularLocation>
</comment>
<comment type="similarity">
    <text evidence="4">Belongs to the Tom40 family.</text>
</comment>
<reference key="1">
    <citation type="journal article" date="1990" name="Nature">
        <title>A yeast mitochondrial outer membrane protein essential for protein import and cell viability.</title>
        <authorList>
            <person name="Baker K.P."/>
            <person name="Schaniel A."/>
            <person name="Vestweber D."/>
            <person name="Schatz G."/>
        </authorList>
    </citation>
    <scope>NUCLEOTIDE SEQUENCE [GENOMIC DNA]</scope>
</reference>
<reference key="2">
    <citation type="journal article" date="1997" name="Nature">
        <title>The nucleotide sequence of Saccharomyces cerevisiae chromosome XIII.</title>
        <authorList>
            <person name="Bowman S."/>
            <person name="Churcher C.M."/>
            <person name="Badcock K."/>
            <person name="Brown D."/>
            <person name="Chillingworth T."/>
            <person name="Connor R."/>
            <person name="Dedman K."/>
            <person name="Devlin K."/>
            <person name="Gentles S."/>
            <person name="Hamlin N."/>
            <person name="Hunt S."/>
            <person name="Jagels K."/>
            <person name="Lye G."/>
            <person name="Moule S."/>
            <person name="Odell C."/>
            <person name="Pearson D."/>
            <person name="Rajandream M.A."/>
            <person name="Rice P."/>
            <person name="Skelton J."/>
            <person name="Walsh S.V."/>
            <person name="Whitehead S."/>
            <person name="Barrell B.G."/>
        </authorList>
    </citation>
    <scope>NUCLEOTIDE SEQUENCE [LARGE SCALE GENOMIC DNA]</scope>
    <source>
        <strain>ATCC 204508 / S288c</strain>
    </source>
</reference>
<reference key="3">
    <citation type="journal article" date="2014" name="G3 (Bethesda)">
        <title>The reference genome sequence of Saccharomyces cerevisiae: Then and now.</title>
        <authorList>
            <person name="Engel S.R."/>
            <person name="Dietrich F.S."/>
            <person name="Fisk D.G."/>
            <person name="Binkley G."/>
            <person name="Balakrishnan R."/>
            <person name="Costanzo M.C."/>
            <person name="Dwight S.S."/>
            <person name="Hitz B.C."/>
            <person name="Karra K."/>
            <person name="Nash R.S."/>
            <person name="Weng S."/>
            <person name="Wong E.D."/>
            <person name="Lloyd P."/>
            <person name="Skrzypek M.S."/>
            <person name="Miyasato S.R."/>
            <person name="Simison M."/>
            <person name="Cherry J.M."/>
        </authorList>
    </citation>
    <scope>GENOME REANNOTATION</scope>
    <source>
        <strain>ATCC 204508 / S288c</strain>
    </source>
</reference>
<reference key="4">
    <citation type="journal article" date="2007" name="Genome Res.">
        <title>Approaching a complete repository of sequence-verified protein-encoding clones for Saccharomyces cerevisiae.</title>
        <authorList>
            <person name="Hu Y."/>
            <person name="Rolfs A."/>
            <person name="Bhullar B."/>
            <person name="Murthy T.V.S."/>
            <person name="Zhu C."/>
            <person name="Berger M.F."/>
            <person name="Camargo A.A."/>
            <person name="Kelley F."/>
            <person name="McCarron S."/>
            <person name="Jepson D."/>
            <person name="Richardson A."/>
            <person name="Raphael J."/>
            <person name="Moreira D."/>
            <person name="Taycher E."/>
            <person name="Zuo D."/>
            <person name="Mohr S."/>
            <person name="Kane M.F."/>
            <person name="Williamson J."/>
            <person name="Simpson A.J.G."/>
            <person name="Bulyk M.L."/>
            <person name="Harlow E."/>
            <person name="Marsischky G."/>
            <person name="Kolodner R.D."/>
            <person name="LaBaer J."/>
        </authorList>
    </citation>
    <scope>NUCLEOTIDE SEQUENCE [GENOMIC DNA]</scope>
    <source>
        <strain>ATCC 204508 / S288c</strain>
    </source>
</reference>
<reference key="5">
    <citation type="journal article" date="1998" name="Mol. Cell. Biol.">
        <title>Preprotein translocase of the outer mitochondrial membrane: molecular dissection and assembly of the general import pore complex.</title>
        <authorList>
            <person name="Dekker P.J.T."/>
            <person name="Ryan M.T."/>
            <person name="Brix J."/>
            <person name="Mueller H."/>
            <person name="Hoenlinger A."/>
            <person name="Pfanner N."/>
        </authorList>
    </citation>
    <scope>IDENTIFICATION IN THE TOM COMPLEX</scope>
</reference>
<reference key="6">
    <citation type="journal article" date="1999" name="J. Cell Biol.">
        <title>Biogenesis of Tom40, core component of the TOM complex of mitochondria.</title>
        <authorList>
            <person name="Rapaport D."/>
            <person name="Neupert W."/>
        </authorList>
    </citation>
    <scope>FUNCTION</scope>
</reference>
<reference key="7">
    <citation type="journal article" date="2003" name="Mol. Cell">
        <title>Assigning function to yeast proteins by integration of technologies.</title>
        <authorList>
            <person name="Hazbun T.R."/>
            <person name="Malmstroem L."/>
            <person name="Anderson S."/>
            <person name="Graczyk B.J."/>
            <person name="Fox B."/>
            <person name="Riffle M."/>
            <person name="Sundin B.A."/>
            <person name="Aranda J.D."/>
            <person name="McDonald W.H."/>
            <person name="Chiu C.-H."/>
            <person name="Snydsman B.E."/>
            <person name="Bradley P."/>
            <person name="Muller E.G.D."/>
            <person name="Fields S."/>
            <person name="Baker D."/>
            <person name="Yates J.R. III"/>
            <person name="Davis T.N."/>
        </authorList>
    </citation>
    <scope>IDENTIFICATION BY MASS SPECTROMETRY</scope>
</reference>
<reference key="8">
    <citation type="journal article" date="2011" name="Dev. Cell">
        <title>Dual role of mitofilin in mitochondrial membrane organization and protein biogenesis.</title>
        <authorList>
            <person name="von der Malsburg K."/>
            <person name="Muller J.M."/>
            <person name="Bohnert M."/>
            <person name="Oeljeklaus S."/>
            <person name="Kwiatkowska P."/>
            <person name="Becker T."/>
            <person name="Loniewska-Lwowska A."/>
            <person name="Wiese S."/>
            <person name="Rao S."/>
            <person name="Milenkovic D."/>
            <person name="Hutu D.P."/>
            <person name="Zerbes R.M."/>
            <person name="Schulze-Specking A."/>
            <person name="Meyer H.E."/>
            <person name="Martinou J.C."/>
            <person name="Rospert S."/>
            <person name="Rehling P."/>
            <person name="Meisinger C."/>
            <person name="Veenhuis M."/>
            <person name="Warscheid B."/>
            <person name="van der Klei I.J."/>
            <person name="Pfanner N."/>
            <person name="Chacinska A."/>
            <person name="van der Laan M."/>
        </authorList>
    </citation>
    <scope>INTERACTION WITH FCJ1</scope>
</reference>
<dbReference type="EMBL" id="X56885">
    <property type="protein sequence ID" value="CAA40206.1"/>
    <property type="molecule type" value="Genomic_DNA"/>
</dbReference>
<dbReference type="EMBL" id="Z48755">
    <property type="protein sequence ID" value="CAA88644.1"/>
    <property type="molecule type" value="Genomic_DNA"/>
</dbReference>
<dbReference type="EMBL" id="AY693021">
    <property type="protein sequence ID" value="AAT93040.1"/>
    <property type="molecule type" value="Genomic_DNA"/>
</dbReference>
<dbReference type="EMBL" id="BK006946">
    <property type="protein sequence ID" value="DAA10102.1"/>
    <property type="molecule type" value="Genomic_DNA"/>
</dbReference>
<dbReference type="PIR" id="S12773">
    <property type="entry name" value="S12773"/>
</dbReference>
<dbReference type="RefSeq" id="NP_013930.1">
    <property type="nucleotide sequence ID" value="NM_001182710.1"/>
</dbReference>
<dbReference type="PDB" id="6JNF">
    <property type="method" value="EM"/>
    <property type="resolution" value="3.81 A"/>
    <property type="chains" value="A/F=1-387"/>
</dbReference>
<dbReference type="PDB" id="6UCU">
    <property type="method" value="EM"/>
    <property type="resolution" value="3.06 A"/>
    <property type="chains" value="A/I=1-387"/>
</dbReference>
<dbReference type="PDB" id="6UCV">
    <property type="method" value="EM"/>
    <property type="resolution" value="4.10 A"/>
    <property type="chains" value="A/I/a/i=1-387"/>
</dbReference>
<dbReference type="PDB" id="7E4H">
    <property type="method" value="EM"/>
    <property type="resolution" value="3.01 A"/>
    <property type="chains" value="D=1-387"/>
</dbReference>
<dbReference type="PDB" id="7E4I">
    <property type="method" value="EM"/>
    <property type="resolution" value="3.05 A"/>
    <property type="chains" value="D=2-387"/>
</dbReference>
<dbReference type="PDB" id="7VKU">
    <property type="method" value="EM"/>
    <property type="resolution" value="3.20 A"/>
    <property type="chains" value="X=1-387"/>
</dbReference>
<dbReference type="PDB" id="8HCO">
    <property type="method" value="EM"/>
    <property type="resolution" value="4.10 A"/>
    <property type="chains" value="A/I=1-387"/>
</dbReference>
<dbReference type="PDB" id="8W5J">
    <property type="method" value="EM"/>
    <property type="resolution" value="4.40 A"/>
    <property type="chains" value="A/I=1-387"/>
</dbReference>
<dbReference type="PDB" id="8W5K">
    <property type="method" value="EM"/>
    <property type="resolution" value="3.60 A"/>
    <property type="chains" value="F/I=1-387"/>
</dbReference>
<dbReference type="PDB" id="8XKW">
    <property type="method" value="EM"/>
    <property type="resolution" value="3.64 A"/>
    <property type="chains" value="A/F=1-387"/>
</dbReference>
<dbReference type="PDB" id="8XKX">
    <property type="method" value="EM"/>
    <property type="resolution" value="3.70 A"/>
    <property type="chains" value="A/F=1-387"/>
</dbReference>
<dbReference type="PDB" id="8XKY">
    <property type="method" value="EM"/>
    <property type="resolution" value="3.42 A"/>
    <property type="chains" value="A/F=1-387"/>
</dbReference>
<dbReference type="PDBsum" id="6JNF"/>
<dbReference type="PDBsum" id="6UCU"/>
<dbReference type="PDBsum" id="6UCV"/>
<dbReference type="PDBsum" id="7E4H"/>
<dbReference type="PDBsum" id="7E4I"/>
<dbReference type="PDBsum" id="7VKU"/>
<dbReference type="PDBsum" id="8HCO"/>
<dbReference type="PDBsum" id="8W5J"/>
<dbReference type="PDBsum" id="8W5K"/>
<dbReference type="PDBsum" id="8XKW"/>
<dbReference type="PDBsum" id="8XKX"/>
<dbReference type="PDBsum" id="8XKY"/>
<dbReference type="EMDB" id="EMD-20728"/>
<dbReference type="EMDB" id="EMD-20729"/>
<dbReference type="EMDB" id="EMD-30985"/>
<dbReference type="EMDB" id="EMD-30986"/>
<dbReference type="EMDB" id="EMD-32019"/>
<dbReference type="EMDB" id="EMD-34660"/>
<dbReference type="EMDB" id="EMD-37294"/>
<dbReference type="EMDB" id="EMD-37295"/>
<dbReference type="EMDB" id="EMD-38429"/>
<dbReference type="EMDB" id="EMD-38430"/>
<dbReference type="EMDB" id="EMD-38431"/>
<dbReference type="EMDB" id="EMD-9851"/>
<dbReference type="SMR" id="P23644"/>
<dbReference type="BioGRID" id="35381">
    <property type="interactions" value="110"/>
</dbReference>
<dbReference type="ComplexPortal" id="CPX-473">
    <property type="entry name" value="TOM40 mitochondrial outer membrane translocase core complex"/>
</dbReference>
<dbReference type="ComplexPortal" id="CPX-474">
    <property type="entry name" value="TOM40 mitochondrial outer membrane translocase holocomplex"/>
</dbReference>
<dbReference type="DIP" id="DIP-2540N"/>
<dbReference type="FunCoup" id="P23644">
    <property type="interactions" value="964"/>
</dbReference>
<dbReference type="IntAct" id="P23644">
    <property type="interactions" value="46"/>
</dbReference>
<dbReference type="MINT" id="P23644"/>
<dbReference type="STRING" id="4932.YMR203W"/>
<dbReference type="TCDB" id="1.B.8.2.1">
    <property type="family name" value="the mitochondrial and plastid porin (mpp) family"/>
</dbReference>
<dbReference type="TCDB" id="3.A.8.1.1">
    <property type="family name" value="the mitochondrial protein translocase (mpt) family"/>
</dbReference>
<dbReference type="GlyGen" id="P23644">
    <property type="glycosylation" value="1 site"/>
</dbReference>
<dbReference type="iPTMnet" id="P23644"/>
<dbReference type="PaxDb" id="4932-YMR203W"/>
<dbReference type="PeptideAtlas" id="P23644"/>
<dbReference type="EnsemblFungi" id="YMR203W_mRNA">
    <property type="protein sequence ID" value="YMR203W"/>
    <property type="gene ID" value="YMR203W"/>
</dbReference>
<dbReference type="GeneID" id="855243"/>
<dbReference type="KEGG" id="sce:YMR203W"/>
<dbReference type="AGR" id="SGD:S000004816"/>
<dbReference type="SGD" id="S000004816">
    <property type="gene designation" value="TOM40"/>
</dbReference>
<dbReference type="VEuPathDB" id="FungiDB:YMR203W"/>
<dbReference type="eggNOG" id="KOG3296">
    <property type="taxonomic scope" value="Eukaryota"/>
</dbReference>
<dbReference type="GeneTree" id="ENSGT00390000003308"/>
<dbReference type="HOGENOM" id="CLU_042174_0_0_1"/>
<dbReference type="InParanoid" id="P23644"/>
<dbReference type="OMA" id="TRFNYRW"/>
<dbReference type="OrthoDB" id="19656at2759"/>
<dbReference type="BioCyc" id="YEAST:G3O-32889-MONOMER"/>
<dbReference type="BioGRID-ORCS" id="855243">
    <property type="hits" value="0 hits in 10 CRISPR screens"/>
</dbReference>
<dbReference type="CD-CODE" id="E03F929F">
    <property type="entry name" value="Stress granule"/>
</dbReference>
<dbReference type="PRO" id="PR:P23644"/>
<dbReference type="Proteomes" id="UP000002311">
    <property type="component" value="Chromosome XIII"/>
</dbReference>
<dbReference type="RNAct" id="P23644">
    <property type="molecule type" value="protein"/>
</dbReference>
<dbReference type="GO" id="GO:0005829">
    <property type="term" value="C:cytosol"/>
    <property type="evidence" value="ECO:0000304"/>
    <property type="project" value="Reactome"/>
</dbReference>
<dbReference type="GO" id="GO:0005758">
    <property type="term" value="C:mitochondrial intermembrane space"/>
    <property type="evidence" value="ECO:0000304"/>
    <property type="project" value="Reactome"/>
</dbReference>
<dbReference type="GO" id="GO:0005741">
    <property type="term" value="C:mitochondrial outer membrane"/>
    <property type="evidence" value="ECO:0000314"/>
    <property type="project" value="ComplexPortal"/>
</dbReference>
<dbReference type="GO" id="GO:0005742">
    <property type="term" value="C:mitochondrial outer membrane translocase complex"/>
    <property type="evidence" value="ECO:0000314"/>
    <property type="project" value="SGD"/>
</dbReference>
<dbReference type="GO" id="GO:0005739">
    <property type="term" value="C:mitochondrion"/>
    <property type="evidence" value="ECO:0007005"/>
    <property type="project" value="SGD"/>
</dbReference>
<dbReference type="GO" id="GO:0046930">
    <property type="term" value="C:pore complex"/>
    <property type="evidence" value="ECO:0007669"/>
    <property type="project" value="UniProtKB-KW"/>
</dbReference>
<dbReference type="GO" id="GO:0015288">
    <property type="term" value="F:porin activity"/>
    <property type="evidence" value="ECO:0007669"/>
    <property type="project" value="UniProtKB-KW"/>
</dbReference>
<dbReference type="GO" id="GO:0008320">
    <property type="term" value="F:protein transmembrane transporter activity"/>
    <property type="evidence" value="ECO:0000314"/>
    <property type="project" value="SGD"/>
</dbReference>
<dbReference type="GO" id="GO:0006811">
    <property type="term" value="P:monoatomic ion transport"/>
    <property type="evidence" value="ECO:0007669"/>
    <property type="project" value="UniProtKB-KW"/>
</dbReference>
<dbReference type="GO" id="GO:0030150">
    <property type="term" value="P:protein import into mitochondrial matrix"/>
    <property type="evidence" value="ECO:0000315"/>
    <property type="project" value="SGD"/>
</dbReference>
<dbReference type="GO" id="GO:0045040">
    <property type="term" value="P:protein insertion into mitochondrial outer membrane"/>
    <property type="evidence" value="ECO:0000314"/>
    <property type="project" value="ComplexPortal"/>
</dbReference>
<dbReference type="CDD" id="cd07305">
    <property type="entry name" value="Porin3_Tom40"/>
    <property type="match status" value="1"/>
</dbReference>
<dbReference type="FunFam" id="2.40.160.10:FF:000009">
    <property type="entry name" value="Mitochondrial import receptor subunit TOM40"/>
    <property type="match status" value="1"/>
</dbReference>
<dbReference type="Gene3D" id="2.40.160.10">
    <property type="entry name" value="Porin"/>
    <property type="match status" value="1"/>
</dbReference>
<dbReference type="InterPro" id="IPR023614">
    <property type="entry name" value="Porin_dom_sf"/>
</dbReference>
<dbReference type="InterPro" id="IPR027246">
    <property type="entry name" value="Porin_Euk/Tom40"/>
</dbReference>
<dbReference type="InterPro" id="IPR037930">
    <property type="entry name" value="Tom40"/>
</dbReference>
<dbReference type="InterPro" id="IPR005686">
    <property type="entry name" value="Tom40_fungi"/>
</dbReference>
<dbReference type="NCBIfam" id="TIGR00989">
    <property type="entry name" value="3a0801s07tom40"/>
    <property type="match status" value="1"/>
</dbReference>
<dbReference type="PANTHER" id="PTHR10802">
    <property type="entry name" value="MITOCHONDRIAL IMPORT RECEPTOR SUBUNIT TOM40"/>
    <property type="match status" value="1"/>
</dbReference>
<dbReference type="Pfam" id="PF01459">
    <property type="entry name" value="Porin_3"/>
    <property type="match status" value="1"/>
</dbReference>
<sequence length="387" mass="42038">MSAPTPLAEASQIPTIPALSPLTAKQSKGNFFSSNPISSFVVDTYKQLHSHRQSLELVNPGTVENLNKEVSRDVFLSQYFFTGLRADLNKAFSMNPAFQTSHTFSIGSQALPKYAFSALFANDNLFAQGNIDNDLSVSGRLNYGWDKKNISKVNLQISDGQPTMCQLEQDYQASDFSVNVKTLNPSFSEKGEFTGVAVASFLQSVTPQLALGLETLYSRTDGSAPGDAGVSYLTRYVSKKQDWIFSGQLQANGALIASLWRKVAQNVEAGIETTLQAGMVPITDPLMGTPIGIQPTVEGSTTIGAKYEYRQSVYRGTLDSNGKVACFLERKVLPTLSVLFCGEIDHFKNDTKIGCGLQFETAGNQELLMLQQGLDADGNPLQALPQL</sequence>
<keyword id="KW-0002">3D-structure</keyword>
<keyword id="KW-0406">Ion transport</keyword>
<keyword id="KW-0472">Membrane</keyword>
<keyword id="KW-0496">Mitochondrion</keyword>
<keyword id="KW-1000">Mitochondrion outer membrane</keyword>
<keyword id="KW-0626">Porin</keyword>
<keyword id="KW-0653">Protein transport</keyword>
<keyword id="KW-1185">Reference proteome</keyword>
<keyword id="KW-0812">Transmembrane</keyword>
<keyword id="KW-1134">Transmembrane beta strand</keyword>
<keyword id="KW-0813">Transport</keyword>
<organism>
    <name type="scientific">Saccharomyces cerevisiae (strain ATCC 204508 / S288c)</name>
    <name type="common">Baker's yeast</name>
    <dbReference type="NCBI Taxonomy" id="559292"/>
    <lineage>
        <taxon>Eukaryota</taxon>
        <taxon>Fungi</taxon>
        <taxon>Dikarya</taxon>
        <taxon>Ascomycota</taxon>
        <taxon>Saccharomycotina</taxon>
        <taxon>Saccharomycetes</taxon>
        <taxon>Saccharomycetales</taxon>
        <taxon>Saccharomycetaceae</taxon>
        <taxon>Saccharomyces</taxon>
    </lineage>
</organism>
<proteinExistence type="evidence at protein level"/>